<sequence length="189" mass="21725">MASPFALLMVLVVLSCKSSCSLGCDLPETHSLDNRRTLMLLAQMSRISPSSCLMDRHDFGFPQEEFDGNQFQKAPAISVLHELIQQIFNLFTTKDSSAAWDEDLLDKFCTELYQQLNDLEACVMQEERVGETPLMNADSILAVKKYFRRITLYLTEKKYSPCAWEVVRAEIMRSLSLSTNLQERLRRKE</sequence>
<name>IFNA1_HUMAN</name>
<evidence type="ECO:0000250" key="1"/>
<evidence type="ECO:0000269" key="2">
    <source>
    </source>
</evidence>
<evidence type="ECO:0000269" key="3">
    <source>
    </source>
</evidence>
<evidence type="ECO:0000269" key="4">
    <source>
    </source>
</evidence>
<evidence type="ECO:0000269" key="5">
    <source>
    </source>
</evidence>
<evidence type="ECO:0000269" key="6">
    <source>
    </source>
</evidence>
<evidence type="ECO:0000269" key="7">
    <source>
    </source>
</evidence>
<evidence type="ECO:0000269" key="8">
    <source ref="8"/>
</evidence>
<evidence type="ECO:0000269" key="9">
    <source ref="9"/>
</evidence>
<evidence type="ECO:0000305" key="10"/>
<evidence type="ECO:0007829" key="11">
    <source>
        <dbReference type="PDB" id="3UX9"/>
    </source>
</evidence>
<proteinExistence type="evidence at protein level"/>
<gene>
    <name type="primary">IFNA1</name>
</gene>
<gene>
    <name type="primary">IFNA13</name>
</gene>
<dbReference type="EMBL" id="V00537">
    <property type="protein sequence ID" value="CAA23798.1"/>
    <property type="molecule type" value="mRNA"/>
</dbReference>
<dbReference type="EMBL" id="J00210">
    <property type="protein sequence ID" value="AAB59403.1"/>
    <property type="molecule type" value="Genomic_DNA"/>
</dbReference>
<dbReference type="EMBL" id="V00538">
    <property type="protein sequence ID" value="CAA23799.1"/>
    <property type="molecule type" value="mRNA"/>
</dbReference>
<dbReference type="EMBL" id="X00803">
    <property type="protein sequence ID" value="CAA25381.1"/>
    <property type="molecule type" value="Genomic_DNA"/>
</dbReference>
<dbReference type="EMBL" id="X75934">
    <property type="protein sequence ID" value="CAA53538.1"/>
    <property type="molecule type" value="Genomic_DNA"/>
</dbReference>
<dbReference type="EMBL" id="AB445100">
    <property type="protein sequence ID" value="BAI99735.1"/>
    <property type="molecule type" value="Genomic_DNA"/>
</dbReference>
<dbReference type="EMBL" id="DQ185447">
    <property type="protein sequence ID" value="ABA03167.1"/>
    <property type="molecule type" value="Genomic_DNA"/>
</dbReference>
<dbReference type="EMBL" id="AL353732">
    <property type="status" value="NOT_ANNOTATED_CDS"/>
    <property type="molecule type" value="Genomic_DNA"/>
</dbReference>
<dbReference type="EMBL" id="CH471071">
    <property type="protein sequence ID" value="EAW58609.1"/>
    <property type="molecule type" value="Genomic_DNA"/>
</dbReference>
<dbReference type="EMBL" id="BC069427">
    <property type="protein sequence ID" value="AAH69427.1"/>
    <property type="molecule type" value="mRNA"/>
</dbReference>
<dbReference type="EMBL" id="BC074928">
    <property type="protein sequence ID" value="AAH74928.1"/>
    <property type="molecule type" value="mRNA"/>
</dbReference>
<dbReference type="EMBL" id="BC074929">
    <property type="protein sequence ID" value="AAH74929.1"/>
    <property type="molecule type" value="mRNA"/>
</dbReference>
<dbReference type="EMBL" id="BC093988">
    <property type="protein sequence ID" value="AAH93988.1"/>
    <property type="molecule type" value="mRNA"/>
</dbReference>
<dbReference type="EMBL" id="BC112002">
    <property type="protein sequence ID" value="AAI12003.1"/>
    <property type="molecule type" value="mRNA"/>
</dbReference>
<dbReference type="EMBL" id="BC112300">
    <property type="protein sequence ID" value="AAI12301.1"/>
    <property type="molecule type" value="mRNA"/>
</dbReference>
<dbReference type="EMBL" id="BC112302">
    <property type="protein sequence ID" value="AAI12303.1"/>
    <property type="molecule type" value="mRNA"/>
</dbReference>
<dbReference type="EMBL" id="M29884">
    <property type="protein sequence ID" value="AAA52714.1"/>
    <property type="molecule type" value="Genomic_DNA"/>
</dbReference>
<dbReference type="EMBL" id="AF439447">
    <property type="protein sequence ID" value="AAL35223.1"/>
    <property type="molecule type" value="Genomic_DNA"/>
</dbReference>
<dbReference type="CCDS" id="CCDS6508.1"/>
<dbReference type="PIR" id="C23285">
    <property type="entry name" value="IVHUA1"/>
</dbReference>
<dbReference type="PIR" id="F42753">
    <property type="entry name" value="F42753"/>
</dbReference>
<dbReference type="PIR" id="H42753">
    <property type="entry name" value="H42753"/>
</dbReference>
<dbReference type="RefSeq" id="NP_008831.3">
    <property type="nucleotide sequence ID" value="NM_006900.3"/>
</dbReference>
<dbReference type="RefSeq" id="NP_076918.1">
    <property type="nucleotide sequence ID" value="NM_024013.3"/>
</dbReference>
<dbReference type="PDB" id="3UX9">
    <property type="method" value="X-ray"/>
    <property type="resolution" value="2.80 A"/>
    <property type="chains" value="A/C=24-189"/>
</dbReference>
<dbReference type="PDBsum" id="3UX9"/>
<dbReference type="SMR" id="P01562"/>
<dbReference type="BioGRID" id="109662">
    <property type="interactions" value="12"/>
</dbReference>
<dbReference type="BioGRID" id="109670">
    <property type="interactions" value="10"/>
</dbReference>
<dbReference type="ComplexPortal" id="CPX-5996">
    <property type="entry name" value="Interferon alpha receptor-ligand complex, IFNA1 variant"/>
</dbReference>
<dbReference type="DIP" id="DIP-6020N"/>
<dbReference type="FunCoup" id="P01562">
    <property type="interactions" value="989"/>
</dbReference>
<dbReference type="IntAct" id="P01562">
    <property type="interactions" value="18"/>
</dbReference>
<dbReference type="MINT" id="P01562"/>
<dbReference type="STRING" id="9606.ENSP00000276927"/>
<dbReference type="BindingDB" id="P01562"/>
<dbReference type="ChEMBL" id="CHEMBL3713007"/>
<dbReference type="GlyGen" id="P01562">
    <property type="glycosylation" value="1 site"/>
</dbReference>
<dbReference type="iPTMnet" id="P01562"/>
<dbReference type="PhosphoSitePlus" id="P01562"/>
<dbReference type="BioMuta" id="IFNA1"/>
<dbReference type="DMDM" id="124455"/>
<dbReference type="MassIVE" id="P01562"/>
<dbReference type="PaxDb" id="9606-ENSP00000276927"/>
<dbReference type="PeptideAtlas" id="P01562"/>
<dbReference type="ABCD" id="P01562">
    <property type="antibodies" value="7 sequenced antibodies"/>
</dbReference>
<dbReference type="Antibodypedia" id="10448">
    <property type="antibodies" value="899 antibodies from 37 providers"/>
</dbReference>
<dbReference type="Antibodypedia" id="24875">
    <property type="antibodies" value="57 antibodies from 13 providers"/>
</dbReference>
<dbReference type="DNASU" id="3439"/>
<dbReference type="Ensembl" id="ENST00000276927.3">
    <property type="protein sequence ID" value="ENSP00000276927.1"/>
    <property type="gene ID" value="ENSG00000197919.6"/>
</dbReference>
<dbReference type="Ensembl" id="ENST00000449498.2">
    <property type="protein sequence ID" value="ENSP00000394494.2"/>
    <property type="gene ID" value="ENSG00000233816.4"/>
</dbReference>
<dbReference type="GeneID" id="3439"/>
<dbReference type="GeneID" id="3447"/>
<dbReference type="KEGG" id="hsa:3439"/>
<dbReference type="KEGG" id="hsa:3447"/>
<dbReference type="MANE-Select" id="ENST00000276927.3">
    <property type="protein sequence ID" value="ENSP00000276927.1"/>
    <property type="RefSeq nucleotide sequence ID" value="NM_024013.3"/>
    <property type="RefSeq protein sequence ID" value="NP_076918.1"/>
</dbReference>
<dbReference type="UCSC" id="uc003zpd.2">
    <property type="organism name" value="human"/>
</dbReference>
<dbReference type="AGR" id="HGNC:5417"/>
<dbReference type="AGR" id="HGNC:5419"/>
<dbReference type="CTD" id="3439"/>
<dbReference type="CTD" id="3447"/>
<dbReference type="DisGeNET" id="3439"/>
<dbReference type="DisGeNET" id="3447"/>
<dbReference type="GeneCards" id="IFNA1"/>
<dbReference type="GeneCards" id="IFNA13"/>
<dbReference type="HGNC" id="HGNC:5417">
    <property type="gene designation" value="IFNA1"/>
</dbReference>
<dbReference type="HGNC" id="HGNC:5419">
    <property type="gene designation" value="IFNA13"/>
</dbReference>
<dbReference type="HPA" id="ENSG00000197919">
    <property type="expression patterns" value="Not detected"/>
</dbReference>
<dbReference type="HPA" id="ENSG00000233816">
    <property type="expression patterns" value="Not detected"/>
</dbReference>
<dbReference type="MIM" id="147578">
    <property type="type" value="gene"/>
</dbReference>
<dbReference type="MIM" id="147660">
    <property type="type" value="gene"/>
</dbReference>
<dbReference type="neXtProt" id="NX_P01562"/>
<dbReference type="OpenTargets" id="ENSG00000197919"/>
<dbReference type="PharmGKB" id="PA29658"/>
<dbReference type="VEuPathDB" id="HostDB:ENSG00000197919"/>
<dbReference type="VEuPathDB" id="HostDB:ENSG00000233816"/>
<dbReference type="eggNOG" id="ENOG502SQAC">
    <property type="taxonomic scope" value="Eukaryota"/>
</dbReference>
<dbReference type="GeneTree" id="ENSGT01000000214430"/>
<dbReference type="HOGENOM" id="CLU_109427_0_0_1"/>
<dbReference type="InParanoid" id="P01562"/>
<dbReference type="OMA" id="SHCAWEM"/>
<dbReference type="OrthoDB" id="9512556at2759"/>
<dbReference type="PAN-GO" id="P01562">
    <property type="GO annotations" value="12 GO annotations based on evolutionary models"/>
</dbReference>
<dbReference type="PhylomeDB" id="P01562"/>
<dbReference type="TreeFam" id="TF336177"/>
<dbReference type="PathwayCommons" id="P01562"/>
<dbReference type="Reactome" id="R-HSA-909733">
    <property type="pathway name" value="Interferon alpha/beta signaling"/>
</dbReference>
<dbReference type="Reactome" id="R-HSA-912694">
    <property type="pathway name" value="Regulation of IFNA/IFNB signaling"/>
</dbReference>
<dbReference type="Reactome" id="R-HSA-933541">
    <property type="pathway name" value="TRAF6 mediated IRF7 activation"/>
</dbReference>
<dbReference type="Reactome" id="R-HSA-9705671">
    <property type="pathway name" value="SARS-CoV-2 activates/modulates innate and adaptive immune responses"/>
</dbReference>
<dbReference type="Reactome" id="R-HSA-983231">
    <property type="pathway name" value="Factors involved in megakaryocyte development and platelet production"/>
</dbReference>
<dbReference type="Reactome" id="R-HSA-9833109">
    <property type="pathway name" value="Evasion by RSV of host interferon responses"/>
</dbReference>
<dbReference type="SignaLink" id="P01562"/>
<dbReference type="SIGNOR" id="P01562"/>
<dbReference type="BioGRID-ORCS" id="3439">
    <property type="hits" value="38 hits in 988 CRISPR screens"/>
</dbReference>
<dbReference type="BioGRID-ORCS" id="3447">
    <property type="hits" value="24 hits in 1010 CRISPR screens"/>
</dbReference>
<dbReference type="EvolutionaryTrace" id="P01562"/>
<dbReference type="GeneWiki" id="IFNA13"/>
<dbReference type="GeneWiki" id="Interferon,_alpha_1"/>
<dbReference type="Pharos" id="P01562">
    <property type="development level" value="Tbio"/>
</dbReference>
<dbReference type="PRO" id="PR:P01562"/>
<dbReference type="Proteomes" id="UP000005640">
    <property type="component" value="Chromosome 9"/>
</dbReference>
<dbReference type="RNAct" id="P01562">
    <property type="molecule type" value="protein"/>
</dbReference>
<dbReference type="Bgee" id="ENSG00000197919">
    <property type="expression patterns" value="Expressed in male germ line stem cell (sensu Vertebrata) in testis and 22 other cell types or tissues"/>
</dbReference>
<dbReference type="ExpressionAtlas" id="P01562">
    <property type="expression patterns" value="baseline and differential"/>
</dbReference>
<dbReference type="GO" id="GO:0005576">
    <property type="term" value="C:extracellular region"/>
    <property type="evidence" value="ECO:0000304"/>
    <property type="project" value="Reactome"/>
</dbReference>
<dbReference type="GO" id="GO:0005615">
    <property type="term" value="C:extracellular space"/>
    <property type="evidence" value="ECO:0000318"/>
    <property type="project" value="GO_Central"/>
</dbReference>
<dbReference type="GO" id="GO:0005125">
    <property type="term" value="F:cytokine activity"/>
    <property type="evidence" value="ECO:0000318"/>
    <property type="project" value="GO_Central"/>
</dbReference>
<dbReference type="GO" id="GO:0005132">
    <property type="term" value="F:type I interferon receptor binding"/>
    <property type="evidence" value="ECO:0000318"/>
    <property type="project" value="GO_Central"/>
</dbReference>
<dbReference type="GO" id="GO:0002250">
    <property type="term" value="P:adaptive immune response"/>
    <property type="evidence" value="ECO:0000318"/>
    <property type="project" value="GO_Central"/>
</dbReference>
<dbReference type="GO" id="GO:0002312">
    <property type="term" value="P:B cell activation involved in immune response"/>
    <property type="evidence" value="ECO:0000318"/>
    <property type="project" value="GO_Central"/>
</dbReference>
<dbReference type="GO" id="GO:0098586">
    <property type="term" value="P:cellular response to virus"/>
    <property type="evidence" value="ECO:0000303"/>
    <property type="project" value="ComplexPortal"/>
</dbReference>
<dbReference type="GO" id="GO:0051607">
    <property type="term" value="P:defense response to virus"/>
    <property type="evidence" value="ECO:0007669"/>
    <property type="project" value="UniProtKB-KW"/>
</dbReference>
<dbReference type="GO" id="GO:0006959">
    <property type="term" value="P:humoral immune response"/>
    <property type="evidence" value="ECO:0000318"/>
    <property type="project" value="GO_Central"/>
</dbReference>
<dbReference type="GO" id="GO:0002323">
    <property type="term" value="P:natural killer cell activation involved in immune response"/>
    <property type="evidence" value="ECO:0000318"/>
    <property type="project" value="GO_Central"/>
</dbReference>
<dbReference type="GO" id="GO:0043330">
    <property type="term" value="P:response to exogenous dsRNA"/>
    <property type="evidence" value="ECO:0000318"/>
    <property type="project" value="GO_Central"/>
</dbReference>
<dbReference type="GO" id="GO:0002286">
    <property type="term" value="P:T cell activation involved in immune response"/>
    <property type="evidence" value="ECO:0000318"/>
    <property type="project" value="GO_Central"/>
</dbReference>
<dbReference type="GO" id="GO:0060337">
    <property type="term" value="P:type I interferon-mediated signaling pathway"/>
    <property type="evidence" value="ECO:0000318"/>
    <property type="project" value="GO_Central"/>
</dbReference>
<dbReference type="CDD" id="cd00095">
    <property type="entry name" value="IFab"/>
    <property type="match status" value="1"/>
</dbReference>
<dbReference type="FunFam" id="1.20.1250.10:FF:000001">
    <property type="entry name" value="Interferon alpha"/>
    <property type="match status" value="1"/>
</dbReference>
<dbReference type="Gene3D" id="1.20.1250.10">
    <property type="match status" value="1"/>
</dbReference>
<dbReference type="InterPro" id="IPR009079">
    <property type="entry name" value="4_helix_cytokine-like_core"/>
</dbReference>
<dbReference type="InterPro" id="IPR000471">
    <property type="entry name" value="Interferon_alpha/beta/delta"/>
</dbReference>
<dbReference type="PANTHER" id="PTHR11691:SF64">
    <property type="entry name" value="INTERFERON ALPHA-1_13"/>
    <property type="match status" value="1"/>
</dbReference>
<dbReference type="PANTHER" id="PTHR11691">
    <property type="entry name" value="TYPE I INTERFERON"/>
    <property type="match status" value="1"/>
</dbReference>
<dbReference type="Pfam" id="PF00143">
    <property type="entry name" value="Interferon"/>
    <property type="match status" value="1"/>
</dbReference>
<dbReference type="PRINTS" id="PR00266">
    <property type="entry name" value="INTERFERONAB"/>
</dbReference>
<dbReference type="SMART" id="SM00076">
    <property type="entry name" value="IFabd"/>
    <property type="match status" value="1"/>
</dbReference>
<dbReference type="SUPFAM" id="SSF47266">
    <property type="entry name" value="4-helical cytokines"/>
    <property type="match status" value="1"/>
</dbReference>
<dbReference type="PROSITE" id="PS00252">
    <property type="entry name" value="INTERFERON_A_B_D"/>
    <property type="match status" value="1"/>
</dbReference>
<organism>
    <name type="scientific">Homo sapiens</name>
    <name type="common">Human</name>
    <dbReference type="NCBI Taxonomy" id="9606"/>
    <lineage>
        <taxon>Eukaryota</taxon>
        <taxon>Metazoa</taxon>
        <taxon>Chordata</taxon>
        <taxon>Craniata</taxon>
        <taxon>Vertebrata</taxon>
        <taxon>Euteleostomi</taxon>
        <taxon>Mammalia</taxon>
        <taxon>Eutheria</taxon>
        <taxon>Euarchontoglires</taxon>
        <taxon>Primates</taxon>
        <taxon>Haplorrhini</taxon>
        <taxon>Catarrhini</taxon>
        <taxon>Hominidae</taxon>
        <taxon>Homo</taxon>
    </lineage>
</organism>
<feature type="signal peptide" evidence="4 7">
    <location>
        <begin position="1"/>
        <end position="23"/>
    </location>
</feature>
<feature type="chain" id="PRO_0000016359" description="Interferon alpha-1/13">
    <location>
        <begin position="24"/>
        <end position="189"/>
    </location>
</feature>
<feature type="disulfide bond" evidence="1">
    <location>
        <begin position="24"/>
        <end position="122"/>
    </location>
</feature>
<feature type="disulfide bond" evidence="6">
    <location>
        <begin position="52"/>
        <end position="162"/>
    </location>
</feature>
<feature type="sequence variant" id="VAR_024508" description="In dbSNP:rs1758567." evidence="3 8 9">
    <original>V</original>
    <variation>A</variation>
    <location>
        <position position="10"/>
    </location>
</feature>
<feature type="sequence variant" id="VAR_013000" description="In alpha-1B; dbSNP:rs2230050." evidence="9">
    <original>A</original>
    <variation>V</variation>
    <location>
        <position position="137"/>
    </location>
</feature>
<feature type="sequence variant" id="VAR_025173" description="In dbSNP:rs28383794." evidence="9">
    <original>A</original>
    <variation>G</variation>
    <location>
        <position position="163"/>
    </location>
</feature>
<feature type="sequence conflict" description="In Ref. 14; AAL35223." evidence="10" ref="14">
    <original>L</original>
    <variation>P</variation>
    <location>
        <position position="116"/>
    </location>
</feature>
<feature type="sequence conflict" description="In Ref. 14; AAL35223." evidence="10" ref="14">
    <original>M</original>
    <variation>V</variation>
    <location>
        <position position="172"/>
    </location>
</feature>
<feature type="helix" evidence="11">
    <location>
        <begin position="35"/>
        <end position="43"/>
    </location>
</feature>
<feature type="helix" evidence="11">
    <location>
        <begin position="49"/>
        <end position="51"/>
    </location>
</feature>
<feature type="turn" evidence="11">
    <location>
        <begin position="53"/>
        <end position="55"/>
    </location>
</feature>
<feature type="helix" evidence="11">
    <location>
        <begin position="63"/>
        <end position="66"/>
    </location>
</feature>
<feature type="helix" evidence="11">
    <location>
        <begin position="77"/>
        <end position="91"/>
    </location>
</feature>
<feature type="helix" evidence="11">
    <location>
        <begin position="94"/>
        <end position="99"/>
    </location>
</feature>
<feature type="helix" evidence="11">
    <location>
        <begin position="102"/>
        <end position="122"/>
    </location>
</feature>
<feature type="helix" evidence="11">
    <location>
        <begin position="137"/>
        <end position="156"/>
    </location>
</feature>
<feature type="turn" evidence="11">
    <location>
        <begin position="157"/>
        <end position="159"/>
    </location>
</feature>
<feature type="helix" evidence="11">
    <location>
        <begin position="161"/>
        <end position="178"/>
    </location>
</feature>
<keyword id="KW-0002">3D-structure</keyword>
<keyword id="KW-0051">Antiviral defense</keyword>
<keyword id="KW-0202">Cytokine</keyword>
<keyword id="KW-0903">Direct protein sequencing</keyword>
<keyword id="KW-1015">Disulfide bond</keyword>
<keyword id="KW-1267">Proteomics identification</keyword>
<keyword id="KW-1185">Reference proteome</keyword>
<keyword id="KW-0964">Secreted</keyword>
<keyword id="KW-0732">Signal</keyword>
<reference key="1">
    <citation type="journal article" date="1980" name="Gene">
        <title>The nucleotide sequence of a cloned human leukocyte interferon cDNA.</title>
        <authorList>
            <person name="Mantei N."/>
            <person name="Schwarzstein M."/>
            <person name="Streuli M."/>
            <person name="Panem S."/>
            <person name="Nagata S."/>
            <person name="Weissmann C."/>
        </authorList>
    </citation>
    <scope>NUCLEOTIDE SEQUENCE [MRNA]</scope>
</reference>
<reference key="2">
    <citation type="journal article" date="1980" name="Nature">
        <title>Human leukocyte and fibroblast interferons are structurally related.</title>
        <authorList>
            <person name="Taniguchi T."/>
            <person name="Mantei N."/>
            <person name="Schwarzstein M."/>
            <person name="Nagata S."/>
            <person name="Muramatsu M."/>
            <person name="Weissmann C."/>
        </authorList>
    </citation>
    <scope>NUCLEOTIDE SEQUENCE [MRNA]</scope>
</reference>
<reference key="3">
    <citation type="journal article" date="1981" name="Nature">
        <title>The structure of eight distinct cloned human leukocyte interferon cDNAs.</title>
        <authorList>
            <person name="Goeddel D.V."/>
            <person name="Leung D.W."/>
            <person name="Dull T.J."/>
            <person name="Gross M."/>
            <person name="Lawn R.M."/>
            <person name="McCandliss R."/>
            <person name="Seeburg P.H."/>
            <person name="Ullrich A."/>
            <person name="Yelverton E."/>
            <person name="Gray P.W."/>
        </authorList>
    </citation>
    <scope>NUCLEOTIDE SEQUENCE [MRNA]</scope>
</reference>
<reference key="4">
    <citation type="journal article" date="1984" name="EMBO J.">
        <title>Two non-allelic human interferon alpha genes with identical coding regions.</title>
        <authorList>
            <person name="Todokoro K."/>
            <person name="Kioussis D."/>
            <person name="Weissmann C."/>
        </authorList>
    </citation>
    <scope>NUCLEOTIDE SEQUENCE [GENOMIC DNA]</scope>
</reference>
<reference key="5">
    <citation type="journal article" date="1985" name="J. Mol. Biol.">
        <title>Structural relationship of human interferon alpha genes and pseudogenes.</title>
        <authorList>
            <person name="Henco K."/>
            <person name="Brosius J."/>
            <person name="Fujisawa A."/>
            <person name="Fujisawa J."/>
            <person name="Haynes J.R."/>
            <person name="Hochstadt J."/>
            <person name="Kovacic T."/>
            <person name="Pasek M."/>
            <person name="Schamboeck A."/>
            <person name="Schmid J."/>
            <person name="Todokoro K."/>
            <person name="Waelchli M."/>
            <person name="Nagata S."/>
            <person name="Weissmann C."/>
        </authorList>
    </citation>
    <scope>NUCLEOTIDE SEQUENCE [GENOMIC DNA]</scope>
</reference>
<reference key="6">
    <citation type="journal article" date="1985" name="Mol. Cell. Biol.">
        <title>Two distinct families of human and bovine interferon-alpha genes are coordinately expressed and encode functional polypeptides.</title>
        <authorList>
            <person name="Capon D.J."/>
            <person name="Shepard H.M."/>
            <person name="Goeddel D.V."/>
        </authorList>
    </citation>
    <scope>NUCLEOTIDE SEQUENCE [MRNA]</scope>
</reference>
<reference key="7">
    <citation type="journal article" date="2010" name="Med. Mol. Morphol.">
        <title>Novel cis-active structures in the coding region mediate CRM1-dependent nuclear export of IFN-alpha 1 mRNA.</title>
        <authorList>
            <person name="Kimura T."/>
            <person name="Hashimoto I."/>
            <person name="Nishizawa M."/>
            <person name="Ito S."/>
            <person name="Yamada H."/>
        </authorList>
    </citation>
    <scope>NUCLEOTIDE SEQUENCE [GENOMIC DNA]</scope>
</reference>
<reference key="8">
    <citation type="submission" date="1993-12" db="EMBL/GenBank/DDBJ databases">
        <authorList>
            <person name="Rostoks N."/>
        </authorList>
    </citation>
    <scope>NUCLEOTIDE SEQUENCE [GENOMIC DNA]</scope>
    <scope>VARIANT ALA-10</scope>
</reference>
<reference key="9">
    <citation type="submission" date="2005-08" db="EMBL/GenBank/DDBJ databases">
        <authorList>
            <consortium name="NIEHS SNPs program"/>
        </authorList>
    </citation>
    <scope>NUCLEOTIDE SEQUENCE [GENOMIC DNA]</scope>
    <scope>VARIANTS ALA-10; VAL-137 AND GLY-163</scope>
</reference>
<reference key="10">
    <citation type="journal article" date="2004" name="Nature">
        <title>DNA sequence and analysis of human chromosome 9.</title>
        <authorList>
            <person name="Humphray S.J."/>
            <person name="Oliver K."/>
            <person name="Hunt A.R."/>
            <person name="Plumb R.W."/>
            <person name="Loveland J.E."/>
            <person name="Howe K.L."/>
            <person name="Andrews T.D."/>
            <person name="Searle S."/>
            <person name="Hunt S.E."/>
            <person name="Scott C.E."/>
            <person name="Jones M.C."/>
            <person name="Ainscough R."/>
            <person name="Almeida J.P."/>
            <person name="Ambrose K.D."/>
            <person name="Ashwell R.I.S."/>
            <person name="Babbage A.K."/>
            <person name="Babbage S."/>
            <person name="Bagguley C.L."/>
            <person name="Bailey J."/>
            <person name="Banerjee R."/>
            <person name="Barker D.J."/>
            <person name="Barlow K.F."/>
            <person name="Bates K."/>
            <person name="Beasley H."/>
            <person name="Beasley O."/>
            <person name="Bird C.P."/>
            <person name="Bray-Allen S."/>
            <person name="Brown A.J."/>
            <person name="Brown J.Y."/>
            <person name="Burford D."/>
            <person name="Burrill W."/>
            <person name="Burton J."/>
            <person name="Carder C."/>
            <person name="Carter N.P."/>
            <person name="Chapman J.C."/>
            <person name="Chen Y."/>
            <person name="Clarke G."/>
            <person name="Clark S.Y."/>
            <person name="Clee C.M."/>
            <person name="Clegg S."/>
            <person name="Collier R.E."/>
            <person name="Corby N."/>
            <person name="Crosier M."/>
            <person name="Cummings A.T."/>
            <person name="Davies J."/>
            <person name="Dhami P."/>
            <person name="Dunn M."/>
            <person name="Dutta I."/>
            <person name="Dyer L.W."/>
            <person name="Earthrowl M.E."/>
            <person name="Faulkner L."/>
            <person name="Fleming C.J."/>
            <person name="Frankish A."/>
            <person name="Frankland J.A."/>
            <person name="French L."/>
            <person name="Fricker D.G."/>
            <person name="Garner P."/>
            <person name="Garnett J."/>
            <person name="Ghori J."/>
            <person name="Gilbert J.G.R."/>
            <person name="Glison C."/>
            <person name="Grafham D.V."/>
            <person name="Gribble S."/>
            <person name="Griffiths C."/>
            <person name="Griffiths-Jones S."/>
            <person name="Grocock R."/>
            <person name="Guy J."/>
            <person name="Hall R.E."/>
            <person name="Hammond S."/>
            <person name="Harley J.L."/>
            <person name="Harrison E.S.I."/>
            <person name="Hart E.A."/>
            <person name="Heath P.D."/>
            <person name="Henderson C.D."/>
            <person name="Hopkins B.L."/>
            <person name="Howard P.J."/>
            <person name="Howden P.J."/>
            <person name="Huckle E."/>
            <person name="Johnson C."/>
            <person name="Johnson D."/>
            <person name="Joy A.A."/>
            <person name="Kay M."/>
            <person name="Keenan S."/>
            <person name="Kershaw J.K."/>
            <person name="Kimberley A.M."/>
            <person name="King A."/>
            <person name="Knights A."/>
            <person name="Laird G.K."/>
            <person name="Langford C."/>
            <person name="Lawlor S."/>
            <person name="Leongamornlert D.A."/>
            <person name="Leversha M."/>
            <person name="Lloyd C."/>
            <person name="Lloyd D.M."/>
            <person name="Lovell J."/>
            <person name="Martin S."/>
            <person name="Mashreghi-Mohammadi M."/>
            <person name="Matthews L."/>
            <person name="McLaren S."/>
            <person name="McLay K.E."/>
            <person name="McMurray A."/>
            <person name="Milne S."/>
            <person name="Nickerson T."/>
            <person name="Nisbett J."/>
            <person name="Nordsiek G."/>
            <person name="Pearce A.V."/>
            <person name="Peck A.I."/>
            <person name="Porter K.M."/>
            <person name="Pandian R."/>
            <person name="Pelan S."/>
            <person name="Phillimore B."/>
            <person name="Povey S."/>
            <person name="Ramsey Y."/>
            <person name="Rand V."/>
            <person name="Scharfe M."/>
            <person name="Sehra H.K."/>
            <person name="Shownkeen R."/>
            <person name="Sims S.K."/>
            <person name="Skuce C.D."/>
            <person name="Smith M."/>
            <person name="Steward C.A."/>
            <person name="Swarbreck D."/>
            <person name="Sycamore N."/>
            <person name="Tester J."/>
            <person name="Thorpe A."/>
            <person name="Tracey A."/>
            <person name="Tromans A."/>
            <person name="Thomas D.W."/>
            <person name="Wall M."/>
            <person name="Wallis J.M."/>
            <person name="West A.P."/>
            <person name="Whitehead S.L."/>
            <person name="Willey D.L."/>
            <person name="Williams S.A."/>
            <person name="Wilming L."/>
            <person name="Wray P.W."/>
            <person name="Young L."/>
            <person name="Ashurst J.L."/>
            <person name="Coulson A."/>
            <person name="Blocker H."/>
            <person name="Durbin R.M."/>
            <person name="Sulston J.E."/>
            <person name="Hubbard T."/>
            <person name="Jackson M.J."/>
            <person name="Bentley D.R."/>
            <person name="Beck S."/>
            <person name="Rogers J."/>
            <person name="Dunham I."/>
        </authorList>
    </citation>
    <scope>NUCLEOTIDE SEQUENCE [LARGE SCALE GENOMIC DNA]</scope>
</reference>
<reference key="11">
    <citation type="submission" date="2005-09" db="EMBL/GenBank/DDBJ databases">
        <authorList>
            <person name="Mural R.J."/>
            <person name="Istrail S."/>
            <person name="Sutton G.G."/>
            <person name="Florea L."/>
            <person name="Halpern A.L."/>
            <person name="Mobarry C.M."/>
            <person name="Lippert R."/>
            <person name="Walenz B."/>
            <person name="Shatkay H."/>
            <person name="Dew I."/>
            <person name="Miller J.R."/>
            <person name="Flanigan M.J."/>
            <person name="Edwards N.J."/>
            <person name="Bolanos R."/>
            <person name="Fasulo D."/>
            <person name="Halldorsson B.V."/>
            <person name="Hannenhalli S."/>
            <person name="Turner R."/>
            <person name="Yooseph S."/>
            <person name="Lu F."/>
            <person name="Nusskern D.R."/>
            <person name="Shue B.C."/>
            <person name="Zheng X.H."/>
            <person name="Zhong F."/>
            <person name="Delcher A.L."/>
            <person name="Huson D.H."/>
            <person name="Kravitz S.A."/>
            <person name="Mouchard L."/>
            <person name="Reinert K."/>
            <person name="Remington K.A."/>
            <person name="Clark A.G."/>
            <person name="Waterman M.S."/>
            <person name="Eichler E.E."/>
            <person name="Adams M.D."/>
            <person name="Hunkapiller M.W."/>
            <person name="Myers E.W."/>
            <person name="Venter J.C."/>
        </authorList>
    </citation>
    <scope>NUCLEOTIDE SEQUENCE [LARGE SCALE GENOMIC DNA]</scope>
</reference>
<reference key="12">
    <citation type="journal article" date="2004" name="Genome Res.">
        <title>The status, quality, and expansion of the NIH full-length cDNA project: the Mammalian Gene Collection (MGC).</title>
        <authorList>
            <consortium name="The MGC Project Team"/>
        </authorList>
    </citation>
    <scope>NUCLEOTIDE SEQUENCE [LARGE SCALE MRNA]</scope>
    <scope>VARIANT ALA-10</scope>
    <source>
        <tissue>Cerebellum</tissue>
    </source>
</reference>
<reference key="13">
    <citation type="journal article" date="1983" name="Nucleic Acids Res.">
        <title>Formation of genes coding for hybrid proteins by recombination between related, cloned genes in E. coli.</title>
        <authorList>
            <person name="Weber H."/>
            <person name="Weissmann C."/>
        </authorList>
    </citation>
    <scope>NUCLEOTIDE SEQUENCE [GENOMIC DNA] OF 24-189</scope>
</reference>
<reference key="14">
    <citation type="submission" date="2001-10" db="EMBL/GenBank/DDBJ databases">
        <authorList>
            <person name="Chen H.H."/>
            <person name="Yu X.B."/>
        </authorList>
    </citation>
    <scope>NUCLEOTIDE SEQUENCE [GENOMIC DNA] OF 24-189</scope>
    <source>
        <tissue>Leukocyte</tissue>
    </source>
</reference>
<reference key="15">
    <citation type="journal article" date="1991" name="EMBO J.">
        <title>Epstein Barr virus/complement C3d receptor is an interferon alpha receptor.</title>
        <authorList>
            <person name="Delcayre A.X."/>
            <person name="Salas F."/>
            <person name="Mathur S."/>
            <person name="Kovats K."/>
            <person name="Lotz M."/>
            <person name="Lernhardt W."/>
        </authorList>
    </citation>
    <scope>INTERACTION WITH CR2</scope>
</reference>
<reference key="16">
    <citation type="journal article" date="1992" name="J. Biol. Chem.">
        <title>Purification and characterization of multiple components of human lymphoblastoid interferon-alpha.</title>
        <authorList>
            <person name="Zoon K.C."/>
            <person name="Miller D."/>
            <person name="Bekisz J."/>
            <person name="zur Nedden D."/>
            <person name="Enterline J.C."/>
            <person name="Nguyen N.Y."/>
            <person name="Hu R.-Q."/>
        </authorList>
    </citation>
    <scope>PROTEIN SEQUENCE OF 24-59</scope>
    <scope>FUNCTION</scope>
</reference>
<reference key="17">
    <citation type="journal article" date="1998" name="Biochem. J.">
        <title>Identification of nine interferon-alpha subtypes produced by Sendai virus-induced human peripheral blood leucocytes.</title>
        <authorList>
            <person name="Nyman T.A."/>
            <person name="Toeloe H."/>
            <person name="Parkkinen J."/>
            <person name="Kalkkinen N."/>
        </authorList>
    </citation>
    <scope>PROTEIN SEQUENCE OF 24-58</scope>
</reference>
<reference key="18">
    <citation type="journal article" date="2000" name="J. Interferon Cytokine Res.">
        <title>IFN-alpha-1a gene is the major variant in the North American population.</title>
        <authorList>
            <person name="Hussain M."/>
            <person name="Ni D."/>
            <person name="Gill D."/>
            <person name="Liao M.-J."/>
        </authorList>
    </citation>
    <scope>POLYMORPHISM</scope>
</reference>
<reference key="19">
    <citation type="journal article" date="2012" name="J. Mol. Med.">
        <title>Structural insights into a human anti-IFN antibody exerting therapeutic potential for systemic lupus erythematosus.</title>
        <authorList>
            <person name="Ouyang S."/>
            <person name="Gong B."/>
            <person name="Li J.Z."/>
            <person name="Zhao L.X."/>
            <person name="Wu W."/>
            <person name="Zhang F.S."/>
            <person name="Sun L."/>
            <person name="Wang S.J."/>
            <person name="Pan M."/>
            <person name="Li C."/>
            <person name="Liang W."/>
            <person name="Shaw N."/>
            <person name="Zheng J."/>
            <person name="Zhao G.P."/>
            <person name="Wang Y."/>
            <person name="Liu Z.J."/>
            <person name="Liang M."/>
        </authorList>
    </citation>
    <scope>X-RAY CRYSTALLOGRAPHY (2.8 ANGSTROMS) OF 24-189 IN COMPLEX WITH ANTIBODY</scope>
    <scope>DISULFIDE BOND</scope>
</reference>
<comment type="function">
    <text evidence="4">Produced by macrophages, IFN-alpha have antiviral activities. Interferon stimulates the production of two enzymes: a protein kinase and an oligoadenylate synthetase.</text>
</comment>
<comment type="subunit">
    <text evidence="5">Interacts with CR2.</text>
</comment>
<comment type="interaction">
    <interactant intactId="EBI-11478589">
        <id>P01562</id>
    </interactant>
    <interactant intactId="EBI-947187">
        <id>Q9UHD9</id>
        <label>UBQLN2</label>
    </interactant>
    <organismsDiffer>false</organismsDiffer>
    <experiments>3</experiments>
</comment>
<comment type="subcellular location">
    <subcellularLocation>
        <location>Secreted</location>
    </subcellularLocation>
</comment>
<comment type="polymorphism">
    <text evidence="2">Two forms exist; alpha-1a (shown here) and alpha-1b (PubMed:11032395).</text>
</comment>
<comment type="miscellaneous">
    <text>Interferons alpha-1 and alpha-13 have identical protein sequences.</text>
</comment>
<comment type="similarity">
    <text evidence="10">Belongs to the alpha/beta interferon family.</text>
</comment>
<accession>P01562</accession>
<accession>D4Q9M8</accession>
<accession>Q14605</accession>
<accession>Q2M1L8</accession>
<accession>Q52LB8</accession>
<accession>Q5VYQ2</accession>
<accession>Q7M4Q1</accession>
<accession>Q8WZ68</accession>
<accession>Q9UMJ3</accession>
<protein>
    <recommendedName>
        <fullName>Interferon alpha-1/13</fullName>
        <shortName>IFN-alpha-1/13</shortName>
    </recommendedName>
    <alternativeName>
        <fullName>Interferon alpha-D</fullName>
        <shortName>LeIF D</shortName>
    </alternativeName>
</protein>